<organism>
    <name type="scientific">Arabidopsis thaliana</name>
    <name type="common">Mouse-ear cress</name>
    <dbReference type="NCBI Taxonomy" id="3702"/>
    <lineage>
        <taxon>Eukaryota</taxon>
        <taxon>Viridiplantae</taxon>
        <taxon>Streptophyta</taxon>
        <taxon>Embryophyta</taxon>
        <taxon>Tracheophyta</taxon>
        <taxon>Spermatophyta</taxon>
        <taxon>Magnoliopsida</taxon>
        <taxon>eudicotyledons</taxon>
        <taxon>Gunneridae</taxon>
        <taxon>Pentapetalae</taxon>
        <taxon>rosids</taxon>
        <taxon>malvids</taxon>
        <taxon>Brassicales</taxon>
        <taxon>Brassicaceae</taxon>
        <taxon>Camelineae</taxon>
        <taxon>Arabidopsis</taxon>
    </lineage>
</organism>
<sequence length="476" mass="51630">MAISAPAACSSSSRILCSYSSPSPSLCPAISTSGKLKTLTLSSSFLPSYSLTTTSASQSTRRSFTVRAARGKFERKKPHVNIGTIGHVDHGKTTLTAALTMALASIGSSVAKKYDEIDAAPEERARGITINTATVEYETENRHYAHVDCPGHADYVKNMITGAAQMDGAILVVSGADGPMPQTKEHILLAKQVGVPDMVVFLNKEDQVDDAELLELVELEVRELLSSYEFNGDDIPIISGSALLAVETLTENPKVKRGDNKWVDKIYELMDAVDDYIPIPQRQTELPFLLAVEDVFSITGRGTVATGRVERGTVKVGETVDLVGLRETRSYTVTGVEMFQKILDEALAGDNVGLLLRGIQKADIQRGMVLAKPGSITPHTKFEAIIYVLKKEEGGRHSPFFAGYRPQFYMRTTDVTGKVTKIMNDKDEESKMVMPGDRVKIVVELIVPVACEQGMRFAIREGGKTVGAGVIGTILE</sequence>
<proteinExistence type="evidence at protein level"/>
<evidence type="ECO:0000250" key="1"/>
<evidence type="ECO:0000255" key="2"/>
<evidence type="ECO:0000269" key="3">
    <source>
    </source>
</evidence>
<evidence type="ECO:0000269" key="4">
    <source>
    </source>
</evidence>
<evidence type="ECO:0000305" key="5"/>
<evidence type="ECO:0007744" key="6">
    <source>
    </source>
</evidence>
<accession>P17745</accession>
<accession>Q8GTE7</accession>
<reference key="1">
    <citation type="journal article" date="1990" name="Nature">
        <title>Evolutionary transfer of the chloroplast tufA gene to the nucleus.</title>
        <authorList>
            <person name="Baldauf S.L."/>
            <person name="Palmer J.D."/>
        </authorList>
    </citation>
    <scope>NUCLEOTIDE SEQUENCE [GENOMIC DNA]</scope>
    <source>
        <strain>cv. Landsberg erecta</strain>
    </source>
</reference>
<reference key="2">
    <citation type="journal article" date="1999" name="Nature">
        <title>Sequence and analysis of chromosome 4 of the plant Arabidopsis thaliana.</title>
        <authorList>
            <person name="Mayer K.F.X."/>
            <person name="Schueller C."/>
            <person name="Wambutt R."/>
            <person name="Murphy G."/>
            <person name="Volckaert G."/>
            <person name="Pohl T."/>
            <person name="Duesterhoeft A."/>
            <person name="Stiekema W."/>
            <person name="Entian K.-D."/>
            <person name="Terryn N."/>
            <person name="Harris B."/>
            <person name="Ansorge W."/>
            <person name="Brandt P."/>
            <person name="Grivell L.A."/>
            <person name="Rieger M."/>
            <person name="Weichselgartner M."/>
            <person name="de Simone V."/>
            <person name="Obermaier B."/>
            <person name="Mache R."/>
            <person name="Mueller M."/>
            <person name="Kreis M."/>
            <person name="Delseny M."/>
            <person name="Puigdomenech P."/>
            <person name="Watson M."/>
            <person name="Schmidtheini T."/>
            <person name="Reichert B."/>
            <person name="Portetelle D."/>
            <person name="Perez-Alonso M."/>
            <person name="Boutry M."/>
            <person name="Bancroft I."/>
            <person name="Vos P."/>
            <person name="Hoheisel J."/>
            <person name="Zimmermann W."/>
            <person name="Wedler H."/>
            <person name="Ridley P."/>
            <person name="Langham S.-A."/>
            <person name="McCullagh B."/>
            <person name="Bilham L."/>
            <person name="Robben J."/>
            <person name="van der Schueren J."/>
            <person name="Grymonprez B."/>
            <person name="Chuang Y.-J."/>
            <person name="Vandenbussche F."/>
            <person name="Braeken M."/>
            <person name="Weltjens I."/>
            <person name="Voet M."/>
            <person name="Bastiaens I."/>
            <person name="Aert R."/>
            <person name="Defoor E."/>
            <person name="Weitzenegger T."/>
            <person name="Bothe G."/>
            <person name="Ramsperger U."/>
            <person name="Hilbert H."/>
            <person name="Braun M."/>
            <person name="Holzer E."/>
            <person name="Brandt A."/>
            <person name="Peters S."/>
            <person name="van Staveren M."/>
            <person name="Dirkse W."/>
            <person name="Mooijman P."/>
            <person name="Klein Lankhorst R."/>
            <person name="Rose M."/>
            <person name="Hauf J."/>
            <person name="Koetter P."/>
            <person name="Berneiser S."/>
            <person name="Hempel S."/>
            <person name="Feldpausch M."/>
            <person name="Lamberth S."/>
            <person name="Van den Daele H."/>
            <person name="De Keyser A."/>
            <person name="Buysshaert C."/>
            <person name="Gielen J."/>
            <person name="Villarroel R."/>
            <person name="De Clercq R."/>
            <person name="van Montagu M."/>
            <person name="Rogers J."/>
            <person name="Cronin A."/>
            <person name="Quail M.A."/>
            <person name="Bray-Allen S."/>
            <person name="Clark L."/>
            <person name="Doggett J."/>
            <person name="Hall S."/>
            <person name="Kay M."/>
            <person name="Lennard N."/>
            <person name="McLay K."/>
            <person name="Mayes R."/>
            <person name="Pettett A."/>
            <person name="Rajandream M.A."/>
            <person name="Lyne M."/>
            <person name="Benes V."/>
            <person name="Rechmann S."/>
            <person name="Borkova D."/>
            <person name="Bloecker H."/>
            <person name="Scharfe M."/>
            <person name="Grimm M."/>
            <person name="Loehnert T.-H."/>
            <person name="Dose S."/>
            <person name="de Haan M."/>
            <person name="Maarse A.C."/>
            <person name="Schaefer M."/>
            <person name="Mueller-Auer S."/>
            <person name="Gabel C."/>
            <person name="Fuchs M."/>
            <person name="Fartmann B."/>
            <person name="Granderath K."/>
            <person name="Dauner D."/>
            <person name="Herzl A."/>
            <person name="Neumann S."/>
            <person name="Argiriou A."/>
            <person name="Vitale D."/>
            <person name="Liguori R."/>
            <person name="Piravandi E."/>
            <person name="Massenet O."/>
            <person name="Quigley F."/>
            <person name="Clabauld G."/>
            <person name="Muendlein A."/>
            <person name="Felber R."/>
            <person name="Schnabl S."/>
            <person name="Hiller R."/>
            <person name="Schmidt W."/>
            <person name="Lecharny A."/>
            <person name="Aubourg S."/>
            <person name="Chefdor F."/>
            <person name="Cooke R."/>
            <person name="Berger C."/>
            <person name="Monfort A."/>
            <person name="Casacuberta E."/>
            <person name="Gibbons T."/>
            <person name="Weber N."/>
            <person name="Vandenbol M."/>
            <person name="Bargues M."/>
            <person name="Terol J."/>
            <person name="Torres A."/>
            <person name="Perez-Perez A."/>
            <person name="Purnelle B."/>
            <person name="Bent E."/>
            <person name="Johnson S."/>
            <person name="Tacon D."/>
            <person name="Jesse T."/>
            <person name="Heijnen L."/>
            <person name="Schwarz S."/>
            <person name="Scholler P."/>
            <person name="Heber S."/>
            <person name="Francs P."/>
            <person name="Bielke C."/>
            <person name="Frishman D."/>
            <person name="Haase D."/>
            <person name="Lemcke K."/>
            <person name="Mewes H.-W."/>
            <person name="Stocker S."/>
            <person name="Zaccaria P."/>
            <person name="Bevan M."/>
            <person name="Wilson R.K."/>
            <person name="de la Bastide M."/>
            <person name="Habermann K."/>
            <person name="Parnell L."/>
            <person name="Dedhia N."/>
            <person name="Gnoj L."/>
            <person name="Schutz K."/>
            <person name="Huang E."/>
            <person name="Spiegel L."/>
            <person name="Sekhon M."/>
            <person name="Murray J."/>
            <person name="Sheet P."/>
            <person name="Cordes M."/>
            <person name="Abu-Threideh J."/>
            <person name="Stoneking T."/>
            <person name="Kalicki J."/>
            <person name="Graves T."/>
            <person name="Harmon G."/>
            <person name="Edwards J."/>
            <person name="Latreille P."/>
            <person name="Courtney L."/>
            <person name="Cloud J."/>
            <person name="Abbott A."/>
            <person name="Scott K."/>
            <person name="Johnson D."/>
            <person name="Minx P."/>
            <person name="Bentley D."/>
            <person name="Fulton B."/>
            <person name="Miller N."/>
            <person name="Greco T."/>
            <person name="Kemp K."/>
            <person name="Kramer J."/>
            <person name="Fulton L."/>
            <person name="Mardis E."/>
            <person name="Dante M."/>
            <person name="Pepin K."/>
            <person name="Hillier L.W."/>
            <person name="Nelson J."/>
            <person name="Spieth J."/>
            <person name="Ryan E."/>
            <person name="Andrews S."/>
            <person name="Geisel C."/>
            <person name="Layman D."/>
            <person name="Du H."/>
            <person name="Ali J."/>
            <person name="Berghoff A."/>
            <person name="Jones K."/>
            <person name="Drone K."/>
            <person name="Cotton M."/>
            <person name="Joshu C."/>
            <person name="Antonoiu B."/>
            <person name="Zidanic M."/>
            <person name="Strong C."/>
            <person name="Sun H."/>
            <person name="Lamar B."/>
            <person name="Yordan C."/>
            <person name="Ma P."/>
            <person name="Zhong J."/>
            <person name="Preston R."/>
            <person name="Vil D."/>
            <person name="Shekher M."/>
            <person name="Matero A."/>
            <person name="Shah R."/>
            <person name="Swaby I.K."/>
            <person name="O'Shaughnessy A."/>
            <person name="Rodriguez M."/>
            <person name="Hoffman J."/>
            <person name="Till S."/>
            <person name="Granat S."/>
            <person name="Shohdy N."/>
            <person name="Hasegawa A."/>
            <person name="Hameed A."/>
            <person name="Lodhi M."/>
            <person name="Johnson A."/>
            <person name="Chen E."/>
            <person name="Marra M.A."/>
            <person name="Martienssen R."/>
            <person name="McCombie W.R."/>
        </authorList>
    </citation>
    <scope>NUCLEOTIDE SEQUENCE [LARGE SCALE GENOMIC DNA]</scope>
    <source>
        <strain>cv. Columbia</strain>
    </source>
</reference>
<reference key="3">
    <citation type="journal article" date="2017" name="Plant J.">
        <title>Araport11: a complete reannotation of the Arabidopsis thaliana reference genome.</title>
        <authorList>
            <person name="Cheng C.Y."/>
            <person name="Krishnakumar V."/>
            <person name="Chan A.P."/>
            <person name="Thibaud-Nissen F."/>
            <person name="Schobel S."/>
            <person name="Town C.D."/>
        </authorList>
    </citation>
    <scope>GENOME REANNOTATION</scope>
    <source>
        <strain>cv. Columbia</strain>
    </source>
</reference>
<reference key="4">
    <citation type="journal article" date="2003" name="Science">
        <title>Empirical analysis of transcriptional activity in the Arabidopsis genome.</title>
        <authorList>
            <person name="Yamada K."/>
            <person name="Lim J."/>
            <person name="Dale J.M."/>
            <person name="Chen H."/>
            <person name="Shinn P."/>
            <person name="Palm C.J."/>
            <person name="Southwick A.M."/>
            <person name="Wu H.C."/>
            <person name="Kim C.J."/>
            <person name="Nguyen M."/>
            <person name="Pham P.K."/>
            <person name="Cheuk R.F."/>
            <person name="Karlin-Newmann G."/>
            <person name="Liu S.X."/>
            <person name="Lam B."/>
            <person name="Sakano H."/>
            <person name="Wu T."/>
            <person name="Yu G."/>
            <person name="Miranda M."/>
            <person name="Quach H.L."/>
            <person name="Tripp M."/>
            <person name="Chang C.H."/>
            <person name="Lee J.M."/>
            <person name="Toriumi M.J."/>
            <person name="Chan M.M."/>
            <person name="Tang C.C."/>
            <person name="Onodera C.S."/>
            <person name="Deng J.M."/>
            <person name="Akiyama K."/>
            <person name="Ansari Y."/>
            <person name="Arakawa T."/>
            <person name="Banh J."/>
            <person name="Banno F."/>
            <person name="Bowser L."/>
            <person name="Brooks S.Y."/>
            <person name="Carninci P."/>
            <person name="Chao Q."/>
            <person name="Choy N."/>
            <person name="Enju A."/>
            <person name="Goldsmith A.D."/>
            <person name="Gurjal M."/>
            <person name="Hansen N.F."/>
            <person name="Hayashizaki Y."/>
            <person name="Johnson-Hopson C."/>
            <person name="Hsuan V.W."/>
            <person name="Iida K."/>
            <person name="Karnes M."/>
            <person name="Khan S."/>
            <person name="Koesema E."/>
            <person name="Ishida J."/>
            <person name="Jiang P.X."/>
            <person name="Jones T."/>
            <person name="Kawai J."/>
            <person name="Kamiya A."/>
            <person name="Meyers C."/>
            <person name="Nakajima M."/>
            <person name="Narusaka M."/>
            <person name="Seki M."/>
            <person name="Sakurai T."/>
            <person name="Satou M."/>
            <person name="Tamse R."/>
            <person name="Vaysberg M."/>
            <person name="Wallender E.K."/>
            <person name="Wong C."/>
            <person name="Yamamura Y."/>
            <person name="Yuan S."/>
            <person name="Shinozaki K."/>
            <person name="Davis R.W."/>
            <person name="Theologis A."/>
            <person name="Ecker J.R."/>
        </authorList>
    </citation>
    <scope>NUCLEOTIDE SEQUENCE [LARGE SCALE MRNA]</scope>
    <source>
        <strain>cv. Columbia</strain>
    </source>
</reference>
<reference key="5">
    <citation type="journal article" date="2007" name="Mol. Cell. Proteomics">
        <title>Multidimensional protein identification technology (MudPIT) analysis of ubiquitinated proteins in plants.</title>
        <authorList>
            <person name="Maor R."/>
            <person name="Jones A."/>
            <person name="Nuehse T.S."/>
            <person name="Studholme D.J."/>
            <person name="Peck S.C."/>
            <person name="Shirasu K."/>
        </authorList>
    </citation>
    <scope>IDENTIFICATION BY MASS SPECTROMETRY [LARGE SCALE ANALYSIS]</scope>
    <source>
        <strain>cv. Landsberg erecta</strain>
    </source>
</reference>
<reference key="6">
    <citation type="journal article" date="2009" name="J. Cell Sci.">
        <title>Arabidopsis Rab-E GTPases exhibit a novel interaction with a plasma-membrane phosphatidylinositol-4-phosphate 5-kinase.</title>
        <authorList>
            <person name="Camacho L."/>
            <person name="Smertenko A.P."/>
            <person name="Perez-Gomez J."/>
            <person name="Hussey P.J."/>
            <person name="Moore I."/>
        </authorList>
    </citation>
    <scope>INTERACTION WITH PI5K2</scope>
</reference>
<reference key="7">
    <citation type="journal article" date="2012" name="J. Integr. Plant Biol.">
        <title>Four closely-related RING-type E3 ligases, APD1-4, are involved in pollen mitosis II regulation in Arabidopsis.</title>
        <authorList>
            <person name="Luo G."/>
            <person name="Gu H."/>
            <person name="Liu J."/>
            <person name="Qu L.-J."/>
        </authorList>
    </citation>
    <scope>INTERACTION WITH APD2</scope>
    <source>
        <strain>cv. Columbia</strain>
    </source>
</reference>
<reference key="8">
    <citation type="journal article" date="2012" name="J. Proteome Res.">
        <title>Identification of phosphoproteins in Arabidopsis thaliana leaves using polyethylene glycol fractionation, immobilized metal-ion affinity chromatography, two-dimensional gel electrophoresis and mass spectrometry.</title>
        <authorList>
            <person name="Aryal U.K."/>
            <person name="Krochko J.E."/>
            <person name="Ross A.R."/>
        </authorList>
    </citation>
    <scope>PHOSPHORYLATION [LARGE SCALE ANALYSIS] AT THR-94</scope>
    <scope>IDENTIFICATION BY MASS SPECTROMETRY [LARGE SCALE ANALYSIS]</scope>
</reference>
<keyword id="KW-0150">Chloroplast</keyword>
<keyword id="KW-0251">Elongation factor</keyword>
<keyword id="KW-0342">GTP-binding</keyword>
<keyword id="KW-0547">Nucleotide-binding</keyword>
<keyword id="KW-0597">Phosphoprotein</keyword>
<keyword id="KW-0934">Plastid</keyword>
<keyword id="KW-0648">Protein biosynthesis</keyword>
<keyword id="KW-1185">Reference proteome</keyword>
<keyword id="KW-0809">Transit peptide</keyword>
<dbReference type="EMBL" id="X52256">
    <property type="protein sequence ID" value="CAA36498.1"/>
    <property type="molecule type" value="Genomic_DNA"/>
</dbReference>
<dbReference type="EMBL" id="AL080253">
    <property type="protein sequence ID" value="CAB45802.2"/>
    <property type="molecule type" value="Genomic_DNA"/>
</dbReference>
<dbReference type="EMBL" id="AL161552">
    <property type="protein sequence ID" value="CAB79036.1"/>
    <property type="molecule type" value="Genomic_DNA"/>
</dbReference>
<dbReference type="EMBL" id="CP002687">
    <property type="protein sequence ID" value="AEE84313.1"/>
    <property type="molecule type" value="Genomic_DNA"/>
</dbReference>
<dbReference type="EMBL" id="CP002687">
    <property type="protein sequence ID" value="ANM67987.1"/>
    <property type="molecule type" value="Genomic_DNA"/>
</dbReference>
<dbReference type="EMBL" id="AF410329">
    <property type="protein sequence ID" value="AAK95315.1"/>
    <property type="molecule type" value="mRNA"/>
</dbReference>
<dbReference type="EMBL" id="AF419609">
    <property type="protein sequence ID" value="AAL31941.1"/>
    <property type="molecule type" value="mRNA"/>
</dbReference>
<dbReference type="EMBL" id="AY074355">
    <property type="protein sequence ID" value="AAL67051.1"/>
    <property type="molecule type" value="mRNA"/>
</dbReference>
<dbReference type="EMBL" id="BT000687">
    <property type="protein sequence ID" value="AAN31832.1"/>
    <property type="molecule type" value="mRNA"/>
</dbReference>
<dbReference type="EMBL" id="BT000699">
    <property type="protein sequence ID" value="AAN31843.1"/>
    <property type="molecule type" value="mRNA"/>
</dbReference>
<dbReference type="EMBL" id="BT000998">
    <property type="protein sequence ID" value="AAN41398.1"/>
    <property type="molecule type" value="mRNA"/>
</dbReference>
<dbReference type="EMBL" id="BT002642">
    <property type="protein sequence ID" value="AAO11558.1"/>
    <property type="molecule type" value="mRNA"/>
</dbReference>
<dbReference type="PIR" id="S09152">
    <property type="entry name" value="S09152"/>
</dbReference>
<dbReference type="RefSeq" id="NP_001329775.1">
    <property type="nucleotide sequence ID" value="NM_001341435.1"/>
</dbReference>
<dbReference type="RefSeq" id="NP_193769.1">
    <property type="nucleotide sequence ID" value="NM_118155.2"/>
</dbReference>
<dbReference type="SMR" id="P17745"/>
<dbReference type="BioGRID" id="13075">
    <property type="interactions" value="15"/>
</dbReference>
<dbReference type="FunCoup" id="P17745">
    <property type="interactions" value="2765"/>
</dbReference>
<dbReference type="IntAct" id="P17745">
    <property type="interactions" value="1"/>
</dbReference>
<dbReference type="MINT" id="P17745"/>
<dbReference type="STRING" id="3702.P17745"/>
<dbReference type="iPTMnet" id="P17745"/>
<dbReference type="MetOSite" id="P17745"/>
<dbReference type="PaxDb" id="3702-AT4G20360.1"/>
<dbReference type="ProteomicsDB" id="221922"/>
<dbReference type="EnsemblPlants" id="AT4G20360.1">
    <property type="protein sequence ID" value="AT4G20360.1"/>
    <property type="gene ID" value="AT4G20360"/>
</dbReference>
<dbReference type="EnsemblPlants" id="AT4G20360.2">
    <property type="protein sequence ID" value="AT4G20360.2"/>
    <property type="gene ID" value="AT4G20360"/>
</dbReference>
<dbReference type="GeneID" id="827784"/>
<dbReference type="Gramene" id="AT4G20360.1">
    <property type="protein sequence ID" value="AT4G20360.1"/>
    <property type="gene ID" value="AT4G20360"/>
</dbReference>
<dbReference type="Gramene" id="AT4G20360.2">
    <property type="protein sequence ID" value="AT4G20360.2"/>
    <property type="gene ID" value="AT4G20360"/>
</dbReference>
<dbReference type="KEGG" id="ath:AT4G20360"/>
<dbReference type="Araport" id="AT4G20360"/>
<dbReference type="TAIR" id="AT4G20360">
    <property type="gene designation" value="ATRABE1B"/>
</dbReference>
<dbReference type="eggNOG" id="KOG0460">
    <property type="taxonomic scope" value="Eukaryota"/>
</dbReference>
<dbReference type="HOGENOM" id="CLU_007265_0_1_1"/>
<dbReference type="InParanoid" id="P17745"/>
<dbReference type="OMA" id="NYIQMMY"/>
<dbReference type="OrthoDB" id="2067at2759"/>
<dbReference type="PhylomeDB" id="P17745"/>
<dbReference type="CD-CODE" id="4299E36E">
    <property type="entry name" value="Nucleolus"/>
</dbReference>
<dbReference type="PRO" id="PR:P17745"/>
<dbReference type="Proteomes" id="UP000006548">
    <property type="component" value="Chromosome 4"/>
</dbReference>
<dbReference type="ExpressionAtlas" id="P17745">
    <property type="expression patterns" value="baseline and differential"/>
</dbReference>
<dbReference type="GO" id="GO:0048046">
    <property type="term" value="C:apoplast"/>
    <property type="evidence" value="ECO:0007005"/>
    <property type="project" value="TAIR"/>
</dbReference>
<dbReference type="GO" id="GO:0009507">
    <property type="term" value="C:chloroplast"/>
    <property type="evidence" value="ECO:0000314"/>
    <property type="project" value="TAIR"/>
</dbReference>
<dbReference type="GO" id="GO:0009941">
    <property type="term" value="C:chloroplast envelope"/>
    <property type="evidence" value="ECO:0007005"/>
    <property type="project" value="TAIR"/>
</dbReference>
<dbReference type="GO" id="GO:0042644">
    <property type="term" value="C:chloroplast nucleoid"/>
    <property type="evidence" value="ECO:0007005"/>
    <property type="project" value="TAIR"/>
</dbReference>
<dbReference type="GO" id="GO:0009570">
    <property type="term" value="C:chloroplast stroma"/>
    <property type="evidence" value="ECO:0007005"/>
    <property type="project" value="TAIR"/>
</dbReference>
<dbReference type="GO" id="GO:0009534">
    <property type="term" value="C:chloroplast thylakoid"/>
    <property type="evidence" value="ECO:0007005"/>
    <property type="project" value="TAIR"/>
</dbReference>
<dbReference type="GO" id="GO:0009535">
    <property type="term" value="C:chloroplast thylakoid membrane"/>
    <property type="evidence" value="ECO:0007005"/>
    <property type="project" value="TAIR"/>
</dbReference>
<dbReference type="GO" id="GO:0005730">
    <property type="term" value="C:nucleolus"/>
    <property type="evidence" value="ECO:0007005"/>
    <property type="project" value="TAIR"/>
</dbReference>
<dbReference type="GO" id="GO:0005634">
    <property type="term" value="C:nucleus"/>
    <property type="evidence" value="ECO:0007005"/>
    <property type="project" value="TAIR"/>
</dbReference>
<dbReference type="GO" id="GO:0009536">
    <property type="term" value="C:plastid"/>
    <property type="evidence" value="ECO:0007005"/>
    <property type="project" value="TAIR"/>
</dbReference>
<dbReference type="GO" id="GO:0005525">
    <property type="term" value="F:GTP binding"/>
    <property type="evidence" value="ECO:0007669"/>
    <property type="project" value="UniProtKB-KW"/>
</dbReference>
<dbReference type="GO" id="GO:0003924">
    <property type="term" value="F:GTPase activity"/>
    <property type="evidence" value="ECO:0007669"/>
    <property type="project" value="InterPro"/>
</dbReference>
<dbReference type="GO" id="GO:0003729">
    <property type="term" value="F:mRNA binding"/>
    <property type="evidence" value="ECO:0000314"/>
    <property type="project" value="TAIR"/>
</dbReference>
<dbReference type="GO" id="GO:0003746">
    <property type="term" value="F:translation elongation factor activity"/>
    <property type="evidence" value="ECO:0007669"/>
    <property type="project" value="UniProtKB-KW"/>
</dbReference>
<dbReference type="GO" id="GO:0009658">
    <property type="term" value="P:chloroplast organization"/>
    <property type="evidence" value="ECO:0000316"/>
    <property type="project" value="TAIR"/>
</dbReference>
<dbReference type="GO" id="GO:0048366">
    <property type="term" value="P:leaf development"/>
    <property type="evidence" value="ECO:0000316"/>
    <property type="project" value="TAIR"/>
</dbReference>
<dbReference type="CDD" id="cd01884">
    <property type="entry name" value="EF_Tu"/>
    <property type="match status" value="1"/>
</dbReference>
<dbReference type="CDD" id="cd03697">
    <property type="entry name" value="EFTU_II"/>
    <property type="match status" value="1"/>
</dbReference>
<dbReference type="CDD" id="cd03707">
    <property type="entry name" value="EFTU_III"/>
    <property type="match status" value="1"/>
</dbReference>
<dbReference type="FunFam" id="2.40.30.10:FF:000001">
    <property type="entry name" value="Elongation factor Tu"/>
    <property type="match status" value="1"/>
</dbReference>
<dbReference type="FunFam" id="2.40.30.10:FF:000046">
    <property type="entry name" value="Elongation factor Tu"/>
    <property type="match status" value="1"/>
</dbReference>
<dbReference type="FunFam" id="3.40.50.300:FF:000003">
    <property type="entry name" value="Elongation factor Tu"/>
    <property type="match status" value="1"/>
</dbReference>
<dbReference type="Gene3D" id="3.40.50.300">
    <property type="entry name" value="P-loop containing nucleotide triphosphate hydrolases"/>
    <property type="match status" value="1"/>
</dbReference>
<dbReference type="Gene3D" id="2.40.30.10">
    <property type="entry name" value="Translation factors"/>
    <property type="match status" value="2"/>
</dbReference>
<dbReference type="HAMAP" id="MF_00118_B">
    <property type="entry name" value="EF_Tu_B"/>
    <property type="match status" value="1"/>
</dbReference>
<dbReference type="InterPro" id="IPR041709">
    <property type="entry name" value="EF-Tu_GTP-bd"/>
</dbReference>
<dbReference type="InterPro" id="IPR050055">
    <property type="entry name" value="EF-Tu_GTPase"/>
</dbReference>
<dbReference type="InterPro" id="IPR004161">
    <property type="entry name" value="EFTu-like_2"/>
</dbReference>
<dbReference type="InterPro" id="IPR033720">
    <property type="entry name" value="EFTU_2"/>
</dbReference>
<dbReference type="InterPro" id="IPR031157">
    <property type="entry name" value="G_TR_CS"/>
</dbReference>
<dbReference type="InterPro" id="IPR027417">
    <property type="entry name" value="P-loop_NTPase"/>
</dbReference>
<dbReference type="InterPro" id="IPR005225">
    <property type="entry name" value="Small_GTP-bd"/>
</dbReference>
<dbReference type="InterPro" id="IPR000795">
    <property type="entry name" value="T_Tr_GTP-bd_dom"/>
</dbReference>
<dbReference type="InterPro" id="IPR009000">
    <property type="entry name" value="Transl_B-barrel_sf"/>
</dbReference>
<dbReference type="InterPro" id="IPR009001">
    <property type="entry name" value="Transl_elong_EF1A/Init_IF2_C"/>
</dbReference>
<dbReference type="InterPro" id="IPR004541">
    <property type="entry name" value="Transl_elong_EFTu/EF1A_bac/org"/>
</dbReference>
<dbReference type="InterPro" id="IPR004160">
    <property type="entry name" value="Transl_elong_EFTu/EF1A_C"/>
</dbReference>
<dbReference type="NCBIfam" id="TIGR00485">
    <property type="entry name" value="EF-Tu"/>
    <property type="match status" value="1"/>
</dbReference>
<dbReference type="NCBIfam" id="NF000766">
    <property type="entry name" value="PRK00049.1"/>
    <property type="match status" value="1"/>
</dbReference>
<dbReference type="NCBIfam" id="NF009372">
    <property type="entry name" value="PRK12735.1"/>
    <property type="match status" value="1"/>
</dbReference>
<dbReference type="NCBIfam" id="NF009373">
    <property type="entry name" value="PRK12736.1"/>
    <property type="match status" value="1"/>
</dbReference>
<dbReference type="NCBIfam" id="TIGR00231">
    <property type="entry name" value="small_GTP"/>
    <property type="match status" value="1"/>
</dbReference>
<dbReference type="PANTHER" id="PTHR43721:SF5">
    <property type="entry name" value="ELONGATION FACTOR TU, CHLOROPLASTIC"/>
    <property type="match status" value="1"/>
</dbReference>
<dbReference type="PANTHER" id="PTHR43721">
    <property type="entry name" value="ELONGATION FACTOR TU-RELATED"/>
    <property type="match status" value="1"/>
</dbReference>
<dbReference type="Pfam" id="PF00009">
    <property type="entry name" value="GTP_EFTU"/>
    <property type="match status" value="1"/>
</dbReference>
<dbReference type="Pfam" id="PF03144">
    <property type="entry name" value="GTP_EFTU_D2"/>
    <property type="match status" value="1"/>
</dbReference>
<dbReference type="Pfam" id="PF03143">
    <property type="entry name" value="GTP_EFTU_D3"/>
    <property type="match status" value="1"/>
</dbReference>
<dbReference type="PRINTS" id="PR00315">
    <property type="entry name" value="ELONGATNFCT"/>
</dbReference>
<dbReference type="SUPFAM" id="SSF50465">
    <property type="entry name" value="EF-Tu/eEF-1alpha/eIF2-gamma C-terminal domain"/>
    <property type="match status" value="1"/>
</dbReference>
<dbReference type="SUPFAM" id="SSF52540">
    <property type="entry name" value="P-loop containing nucleoside triphosphate hydrolases"/>
    <property type="match status" value="1"/>
</dbReference>
<dbReference type="SUPFAM" id="SSF50447">
    <property type="entry name" value="Translation proteins"/>
    <property type="match status" value="1"/>
</dbReference>
<dbReference type="PROSITE" id="PS00301">
    <property type="entry name" value="G_TR_1"/>
    <property type="match status" value="1"/>
</dbReference>
<dbReference type="PROSITE" id="PS51722">
    <property type="entry name" value="G_TR_2"/>
    <property type="match status" value="1"/>
</dbReference>
<name>EFTU_ARATH</name>
<protein>
    <recommendedName>
        <fullName>Elongation factor Tu, chloroplastic</fullName>
        <shortName>EF-Tu</shortName>
    </recommendedName>
    <alternativeName>
        <fullName>Ras-related protein RABE1b</fullName>
        <shortName>AtRABE1b</shortName>
    </alternativeName>
    <alternativeName>
        <fullName>Ras-related protein Rab8D</fullName>
        <shortName>AtRab8D</shortName>
    </alternativeName>
</protein>
<feature type="transit peptide" description="Chloroplast" evidence="2">
    <location>
        <begin position="1"/>
        <end position="67"/>
    </location>
</feature>
<feature type="chain" id="PRO_0000007454" description="Elongation factor Tu, chloroplastic">
    <location>
        <begin position="68"/>
        <end position="476"/>
    </location>
</feature>
<feature type="domain" description="tr-type G">
    <location>
        <begin position="77"/>
        <end position="281"/>
    </location>
</feature>
<feature type="region of interest" description="G1" evidence="1">
    <location>
        <begin position="86"/>
        <end position="93"/>
    </location>
</feature>
<feature type="region of interest" description="G2" evidence="1">
    <location>
        <begin position="127"/>
        <end position="131"/>
    </location>
</feature>
<feature type="region of interest" description="G3" evidence="1">
    <location>
        <begin position="148"/>
        <end position="151"/>
    </location>
</feature>
<feature type="region of interest" description="G4" evidence="1">
    <location>
        <begin position="203"/>
        <end position="206"/>
    </location>
</feature>
<feature type="region of interest" description="G5" evidence="1">
    <location>
        <begin position="241"/>
        <end position="243"/>
    </location>
</feature>
<feature type="binding site" evidence="1">
    <location>
        <begin position="86"/>
        <end position="93"/>
    </location>
    <ligand>
        <name>GTP</name>
        <dbReference type="ChEBI" id="CHEBI:37565"/>
    </ligand>
</feature>
<feature type="binding site" evidence="1">
    <location>
        <begin position="148"/>
        <end position="152"/>
    </location>
    <ligand>
        <name>GTP</name>
        <dbReference type="ChEBI" id="CHEBI:37565"/>
    </ligand>
</feature>
<feature type="binding site" evidence="1">
    <location>
        <begin position="203"/>
        <end position="206"/>
    </location>
    <ligand>
        <name>GTP</name>
        <dbReference type="ChEBI" id="CHEBI:37565"/>
    </ligand>
</feature>
<feature type="modified residue" description="Phosphothreonine" evidence="6">
    <location>
        <position position="94"/>
    </location>
</feature>
<feature type="sequence conflict" description="In Ref. 4; AAN31832." evidence="5" ref="4">
    <original>A</original>
    <variation>P</variation>
    <location>
        <position position="2"/>
    </location>
</feature>
<comment type="function">
    <text>This protein promotes the GTP-dependent binding of aminoacyl-tRNA to the A-site of ribosomes during protein biosynthesis.</text>
</comment>
<comment type="subunit">
    <text evidence="3 4">Interacts with PI5K2 (PubMed:19903693). Interacts with APD2 (PubMed:22897245).</text>
</comment>
<comment type="subcellular location">
    <subcellularLocation>
        <location evidence="2">Plastid</location>
        <location evidence="2">Chloroplast</location>
    </subcellularLocation>
</comment>
<comment type="similarity">
    <text evidence="5">Belongs to the TRAFAC class translation factor GTPase superfamily. Classic translation factor GTPase family. EF-Tu/EF-1A subfamily.</text>
</comment>
<gene>
    <name type="primary">TUFA</name>
    <name type="synonym">RAB8D</name>
    <name type="synonym">RABE1B</name>
    <name type="ordered locus">At4g20360</name>
    <name type="ORF">F9F13.10</name>
</gene>